<evidence type="ECO:0000250" key="1"/>
<evidence type="ECO:0000250" key="2">
    <source>
        <dbReference type="UniProtKB" id="P04311"/>
    </source>
</evidence>
<evidence type="ECO:0000255" key="3">
    <source>
        <dbReference type="PROSITE-ProRule" id="PRU00794"/>
    </source>
</evidence>
<evidence type="ECO:0000305" key="4"/>
<feature type="chain" id="PRO_0000057094" description="mRNA-decapping protein OPG121">
    <location>
        <begin position="1"/>
        <end position="213"/>
    </location>
</feature>
<feature type="domain" description="Nudix hydrolase" evidence="3">
    <location>
        <begin position="30"/>
        <end position="209"/>
    </location>
</feature>
<feature type="short sequence motif" description="Nudix box" evidence="3">
    <location>
        <begin position="111"/>
        <end position="132"/>
    </location>
</feature>
<feature type="active site" description="Nucleophile" evidence="1">
    <location>
        <position position="126"/>
    </location>
</feature>
<feature type="binding site" evidence="2">
    <location>
        <position position="16"/>
    </location>
    <ligand>
        <name>N(7)-methyl-GTP</name>
        <dbReference type="ChEBI" id="CHEBI:87133"/>
    </ligand>
</feature>
<feature type="binding site" evidence="2">
    <location>
        <position position="50"/>
    </location>
    <ligand>
        <name>N(7)-methyl-GTP</name>
        <dbReference type="ChEBI" id="CHEBI:87133"/>
    </ligand>
</feature>
<feature type="binding site" evidence="1">
    <location>
        <position position="117"/>
    </location>
    <ligand>
        <name>Mg(2+)</name>
        <dbReference type="ChEBI" id="CHEBI:18420"/>
    </ligand>
</feature>
<feature type="binding site" evidence="2">
    <location>
        <position position="126"/>
    </location>
    <ligand>
        <name>Mg(2+)</name>
        <dbReference type="ChEBI" id="CHEBI:18420"/>
    </ligand>
</feature>
<feature type="binding site" evidence="2">
    <location>
        <position position="130"/>
    </location>
    <ligand>
        <name>Mg(2+)</name>
        <dbReference type="ChEBI" id="CHEBI:18420"/>
    </ligand>
</feature>
<feature type="binding site" evidence="1">
    <location>
        <position position="151"/>
    </location>
    <ligand>
        <name>Mg(2+)</name>
        <dbReference type="ChEBI" id="CHEBI:18420"/>
    </ligand>
</feature>
<feature type="binding site" evidence="2">
    <location>
        <position position="151"/>
    </location>
    <ligand>
        <name>N(7)-methyl-GTP</name>
        <dbReference type="ChEBI" id="CHEBI:87133"/>
    </ligand>
</feature>
<feature type="binding site" evidence="2">
    <location>
        <position position="183"/>
    </location>
    <ligand>
        <name>Mg(2+)</name>
        <dbReference type="ChEBI" id="CHEBI:18420"/>
    </ligand>
</feature>
<protein>
    <recommendedName>
        <fullName>mRNA-decapping protein OPG121</fullName>
        <ecNumber>3.1.3.-</ecNumber>
    </recommendedName>
</protein>
<name>PG121_VAR67</name>
<comment type="function">
    <text evidence="2">Decapping enzyme that remove the protective 5'-cap from both host and viral mRNAs to commit transcripts for decay by the cellular exonuclease XRN1. Accelerates viral and cellular mRNA turnover to eliminate competing host mRNAs and allow stage-specific synthesis of viral proteins. Acceleration of the turnover of cellular transcripts may even promote the shutoff of host protein synthesis.</text>
</comment>
<comment type="catalytic activity">
    <reaction evidence="2">
        <text>a 5'-end (N(7)-methyl 5'-triphosphoguanosine)-guanosine in mRNA + H2O = a 5'-end phospho-guanosine in mRNA + N(7)-methyl-GDP + 2 H(+)</text>
        <dbReference type="Rhea" id="RHEA:60872"/>
        <dbReference type="Rhea" id="RHEA-COMP:15683"/>
        <dbReference type="Rhea" id="RHEA-COMP:15687"/>
        <dbReference type="ChEBI" id="CHEBI:15377"/>
        <dbReference type="ChEBI" id="CHEBI:15378"/>
        <dbReference type="ChEBI" id="CHEBI:63714"/>
        <dbReference type="ChEBI" id="CHEBI:143975"/>
        <dbReference type="ChEBI" id="CHEBI:143979"/>
    </reaction>
</comment>
<comment type="cofactor">
    <cofactor evidence="2">
        <name>Mg(2+)</name>
        <dbReference type="ChEBI" id="CHEBI:18420"/>
    </cofactor>
    <cofactor evidence="2">
        <name>Mn(2+)</name>
        <dbReference type="ChEBI" id="CHEBI:29035"/>
    </cofactor>
</comment>
<comment type="induction">
    <text>Expressed in the early phase of the viral replicative cycle.</text>
</comment>
<comment type="similarity">
    <text evidence="4">Belongs to the Nudix hydrolase family.</text>
</comment>
<organismHost>
    <name type="scientific">Homo sapiens</name>
    <name type="common">Human</name>
    <dbReference type="NCBI Taxonomy" id="9606"/>
</organismHost>
<keyword id="KW-0378">Hydrolase</keyword>
<keyword id="KW-0460">Magnesium</keyword>
<keyword id="KW-0464">Manganese</keyword>
<keyword id="KW-0479">Metal-binding</keyword>
<keyword id="KW-1185">Reference proteome</keyword>
<gene>
    <name type="primary">OPG121</name>
    <name type="ORF">D9R</name>
</gene>
<reference key="1">
    <citation type="journal article" date="1993" name="Virus Res.">
        <title>Nucleotide sequence analysis of variola virus HindIII M, L, I genome fragments.</title>
        <authorList>
            <person name="Shchelkunov S.N."/>
            <person name="Blinov V.M."/>
            <person name="Totmenin A.V."/>
            <person name="Marennikova S.S."/>
            <person name="Kolykhalov A.A."/>
            <person name="Frolov I.V."/>
            <person name="Chizhikov V.E."/>
            <person name="Gytorov V.V."/>
            <person name="Gashikov P.V."/>
            <person name="Belanov E.F."/>
            <person name="Belavin P.A."/>
            <person name="Resenchuk S.M."/>
            <person name="Andzhaparidze O.G."/>
            <person name="Sandakhchiev L.S."/>
        </authorList>
    </citation>
    <scope>NUCLEOTIDE SEQUENCE [GENOMIC DNA]</scope>
</reference>
<reference key="2">
    <citation type="journal article" date="1993" name="FEBS Lett.">
        <title>Genes of variola and vaccinia viruses necessary to overcome the host protective mechanisms.</title>
        <authorList>
            <person name="Shchelkunov S.N."/>
            <person name="Blinov V.M."/>
            <person name="Sandakhchiev L.S."/>
        </authorList>
    </citation>
    <scope>NUCLEOTIDE SEQUENCE [LARGE SCALE GENOMIC DNA]</scope>
</reference>
<accession>P0DOU5</accession>
<accession>P33070</accession>
<organism>
    <name type="scientific">Variola virus (isolate Human/India/Ind3/1967)</name>
    <name type="common">VARV</name>
    <name type="synonym">Smallpox virus</name>
    <dbReference type="NCBI Taxonomy" id="587200"/>
    <lineage>
        <taxon>Viruses</taxon>
        <taxon>Varidnaviria</taxon>
        <taxon>Bamfordvirae</taxon>
        <taxon>Nucleocytoviricota</taxon>
        <taxon>Pokkesviricetes</taxon>
        <taxon>Chitovirales</taxon>
        <taxon>Poxviridae</taxon>
        <taxon>Chordopoxvirinae</taxon>
        <taxon>Orthopoxvirus</taxon>
        <taxon>Variola virus</taxon>
    </lineage>
</organism>
<dbReference type="EC" id="3.1.3.-"/>
<dbReference type="EMBL" id="X67119">
    <property type="protein sequence ID" value="CAA47598.1"/>
    <property type="molecule type" value="Genomic_DNA"/>
</dbReference>
<dbReference type="EMBL" id="X69198">
    <property type="protein sequence ID" value="CAA49040.1"/>
    <property type="molecule type" value="Genomic_DNA"/>
</dbReference>
<dbReference type="PIR" id="F36847">
    <property type="entry name" value="F36847"/>
</dbReference>
<dbReference type="SMR" id="P0DOU5"/>
<dbReference type="KEGG" id="vg:1486425"/>
<dbReference type="Proteomes" id="UP000002060">
    <property type="component" value="Segment"/>
</dbReference>
<dbReference type="GO" id="GO:0016787">
    <property type="term" value="F:hydrolase activity"/>
    <property type="evidence" value="ECO:0007669"/>
    <property type="project" value="UniProtKB-KW"/>
</dbReference>
<dbReference type="GO" id="GO:0046872">
    <property type="term" value="F:metal ion binding"/>
    <property type="evidence" value="ECO:0007669"/>
    <property type="project" value="UniProtKB-KW"/>
</dbReference>
<dbReference type="Gene3D" id="3.90.79.10">
    <property type="entry name" value="Nucleoside Triphosphate Pyrophosphohydrolase"/>
    <property type="match status" value="1"/>
</dbReference>
<dbReference type="InterPro" id="IPR015797">
    <property type="entry name" value="NUDIX_hydrolase-like_dom_sf"/>
</dbReference>
<dbReference type="InterPro" id="IPR000086">
    <property type="entry name" value="NUDIX_hydrolase_dom"/>
</dbReference>
<dbReference type="InterPro" id="IPR003300">
    <property type="entry name" value="Viral_VD9"/>
</dbReference>
<dbReference type="Pfam" id="PF00293">
    <property type="entry name" value="NUDIX"/>
    <property type="match status" value="1"/>
</dbReference>
<dbReference type="PRINTS" id="PR01363">
    <property type="entry name" value="VD09PROTEIN"/>
</dbReference>
<dbReference type="SUPFAM" id="SSF55811">
    <property type="entry name" value="Nudix"/>
    <property type="match status" value="1"/>
</dbReference>
<dbReference type="PROSITE" id="PS51462">
    <property type="entry name" value="NUDIX"/>
    <property type="match status" value="1"/>
</dbReference>
<dbReference type="PROSITE" id="PS00893">
    <property type="entry name" value="NUDIX_BOX"/>
    <property type="match status" value="1"/>
</dbReference>
<sequence>MGITMDEEVIFETPRELISIKRIKDIPRSKDTHVFAACITSDGYPLIGARRTSFAFQAILSQQNSDSIFRVSTKLLRFMYYNELREIFRRLRKGSINNIDPHFEELILLGGKLDKKESIKDCLRRELKEESDERITVKEFGNVILKLTTQDKLFNKVYIGYCMSCFINQSLEDLSHTSIYNVEIRKIKSLNDCINDDKYEYLSYIYNMLVNSK</sequence>
<proteinExistence type="evidence at transcript level"/>